<name>RL24_BACC0</name>
<accession>B7JKD0</accession>
<proteinExistence type="inferred from homology"/>
<feature type="chain" id="PRO_1000141960" description="Large ribosomal subunit protein uL24">
    <location>
        <begin position="1"/>
        <end position="103"/>
    </location>
</feature>
<dbReference type="EMBL" id="CP001283">
    <property type="protein sequence ID" value="ACK88110.1"/>
    <property type="molecule type" value="Genomic_DNA"/>
</dbReference>
<dbReference type="RefSeq" id="WP_000558200.1">
    <property type="nucleotide sequence ID" value="NC_011773.1"/>
</dbReference>
<dbReference type="SMR" id="B7JKD0"/>
<dbReference type="GeneID" id="93010932"/>
<dbReference type="KEGG" id="bcu:BCAH820_0133"/>
<dbReference type="HOGENOM" id="CLU_093315_2_0_9"/>
<dbReference type="Proteomes" id="UP000001363">
    <property type="component" value="Chromosome"/>
</dbReference>
<dbReference type="GO" id="GO:1990904">
    <property type="term" value="C:ribonucleoprotein complex"/>
    <property type="evidence" value="ECO:0007669"/>
    <property type="project" value="UniProtKB-KW"/>
</dbReference>
<dbReference type="GO" id="GO:0005840">
    <property type="term" value="C:ribosome"/>
    <property type="evidence" value="ECO:0007669"/>
    <property type="project" value="UniProtKB-KW"/>
</dbReference>
<dbReference type="GO" id="GO:0019843">
    <property type="term" value="F:rRNA binding"/>
    <property type="evidence" value="ECO:0007669"/>
    <property type="project" value="UniProtKB-UniRule"/>
</dbReference>
<dbReference type="GO" id="GO:0003735">
    <property type="term" value="F:structural constituent of ribosome"/>
    <property type="evidence" value="ECO:0007669"/>
    <property type="project" value="InterPro"/>
</dbReference>
<dbReference type="GO" id="GO:0006412">
    <property type="term" value="P:translation"/>
    <property type="evidence" value="ECO:0007669"/>
    <property type="project" value="UniProtKB-UniRule"/>
</dbReference>
<dbReference type="CDD" id="cd06089">
    <property type="entry name" value="KOW_RPL26"/>
    <property type="match status" value="1"/>
</dbReference>
<dbReference type="FunFam" id="2.30.30.30:FF:000004">
    <property type="entry name" value="50S ribosomal protein L24"/>
    <property type="match status" value="1"/>
</dbReference>
<dbReference type="Gene3D" id="2.30.30.30">
    <property type="match status" value="1"/>
</dbReference>
<dbReference type="HAMAP" id="MF_01326_B">
    <property type="entry name" value="Ribosomal_uL24_B"/>
    <property type="match status" value="1"/>
</dbReference>
<dbReference type="InterPro" id="IPR005824">
    <property type="entry name" value="KOW"/>
</dbReference>
<dbReference type="InterPro" id="IPR014722">
    <property type="entry name" value="Rib_uL2_dom2"/>
</dbReference>
<dbReference type="InterPro" id="IPR003256">
    <property type="entry name" value="Ribosomal_uL24"/>
</dbReference>
<dbReference type="InterPro" id="IPR005825">
    <property type="entry name" value="Ribosomal_uL24_CS"/>
</dbReference>
<dbReference type="InterPro" id="IPR041988">
    <property type="entry name" value="Ribosomal_uL24_KOW"/>
</dbReference>
<dbReference type="InterPro" id="IPR008991">
    <property type="entry name" value="Translation_prot_SH3-like_sf"/>
</dbReference>
<dbReference type="NCBIfam" id="TIGR01079">
    <property type="entry name" value="rplX_bact"/>
    <property type="match status" value="1"/>
</dbReference>
<dbReference type="PANTHER" id="PTHR12903">
    <property type="entry name" value="MITOCHONDRIAL RIBOSOMAL PROTEIN L24"/>
    <property type="match status" value="1"/>
</dbReference>
<dbReference type="Pfam" id="PF00467">
    <property type="entry name" value="KOW"/>
    <property type="match status" value="1"/>
</dbReference>
<dbReference type="Pfam" id="PF17136">
    <property type="entry name" value="ribosomal_L24"/>
    <property type="match status" value="1"/>
</dbReference>
<dbReference type="SMART" id="SM00739">
    <property type="entry name" value="KOW"/>
    <property type="match status" value="1"/>
</dbReference>
<dbReference type="SUPFAM" id="SSF50104">
    <property type="entry name" value="Translation proteins SH3-like domain"/>
    <property type="match status" value="1"/>
</dbReference>
<dbReference type="PROSITE" id="PS01108">
    <property type="entry name" value="RIBOSOMAL_L24"/>
    <property type="match status" value="1"/>
</dbReference>
<evidence type="ECO:0000255" key="1">
    <source>
        <dbReference type="HAMAP-Rule" id="MF_01326"/>
    </source>
</evidence>
<evidence type="ECO:0000305" key="2"/>
<protein>
    <recommendedName>
        <fullName evidence="1">Large ribosomal subunit protein uL24</fullName>
    </recommendedName>
    <alternativeName>
        <fullName evidence="2">50S ribosomal protein L24</fullName>
    </alternativeName>
</protein>
<organism>
    <name type="scientific">Bacillus cereus (strain AH820)</name>
    <dbReference type="NCBI Taxonomy" id="405535"/>
    <lineage>
        <taxon>Bacteria</taxon>
        <taxon>Bacillati</taxon>
        <taxon>Bacillota</taxon>
        <taxon>Bacilli</taxon>
        <taxon>Bacillales</taxon>
        <taxon>Bacillaceae</taxon>
        <taxon>Bacillus</taxon>
        <taxon>Bacillus cereus group</taxon>
    </lineage>
</organism>
<sequence length="103" mass="11228">MHVKKGDKVQVITGKDKGKQGVILVAFPKQNRVIVEGVNIVKKHSKPSQLNPQGGIITKEAPIHVSNVMILDPKTGEPTRVGFKVEDGKKVRIAKKSGELLDK</sequence>
<comment type="function">
    <text evidence="1">One of two assembly initiator proteins, it binds directly to the 5'-end of the 23S rRNA, where it nucleates assembly of the 50S subunit.</text>
</comment>
<comment type="function">
    <text evidence="1">One of the proteins that surrounds the polypeptide exit tunnel on the outside of the subunit.</text>
</comment>
<comment type="subunit">
    <text evidence="1">Part of the 50S ribosomal subunit.</text>
</comment>
<comment type="similarity">
    <text evidence="1">Belongs to the universal ribosomal protein uL24 family.</text>
</comment>
<reference key="1">
    <citation type="submission" date="2008-10" db="EMBL/GenBank/DDBJ databases">
        <title>Genome sequence of Bacillus cereus AH820.</title>
        <authorList>
            <person name="Dodson R.J."/>
            <person name="Durkin A.S."/>
            <person name="Rosovitz M.J."/>
            <person name="Rasko D.A."/>
            <person name="Hoffmaster A."/>
            <person name="Ravel J."/>
            <person name="Sutton G."/>
        </authorList>
    </citation>
    <scope>NUCLEOTIDE SEQUENCE [LARGE SCALE GENOMIC DNA]</scope>
    <source>
        <strain>AH820</strain>
    </source>
</reference>
<gene>
    <name evidence="1" type="primary">rplX</name>
    <name type="ordered locus">BCAH820_0133</name>
</gene>
<keyword id="KW-0687">Ribonucleoprotein</keyword>
<keyword id="KW-0689">Ribosomal protein</keyword>
<keyword id="KW-0694">RNA-binding</keyword>
<keyword id="KW-0699">rRNA-binding</keyword>